<comment type="function">
    <text evidence="1">DNA-dependent RNA polymerase catalyzes the transcription of DNA into RNA using the four ribonucleoside triphosphates as substrates.</text>
</comment>
<comment type="catalytic activity">
    <reaction evidence="1">
        <text>RNA(n) + a ribonucleoside 5'-triphosphate = RNA(n+1) + diphosphate</text>
        <dbReference type="Rhea" id="RHEA:21248"/>
        <dbReference type="Rhea" id="RHEA-COMP:14527"/>
        <dbReference type="Rhea" id="RHEA-COMP:17342"/>
        <dbReference type="ChEBI" id="CHEBI:33019"/>
        <dbReference type="ChEBI" id="CHEBI:61557"/>
        <dbReference type="ChEBI" id="CHEBI:140395"/>
        <dbReference type="EC" id="2.7.7.6"/>
    </reaction>
</comment>
<comment type="cofactor">
    <cofactor evidence="1">
        <name>Mg(2+)</name>
        <dbReference type="ChEBI" id="CHEBI:18420"/>
    </cofactor>
    <text evidence="1">Binds 1 Mg(2+) ion per subunit.</text>
</comment>
<comment type="cofactor">
    <cofactor evidence="1">
        <name>Zn(2+)</name>
        <dbReference type="ChEBI" id="CHEBI:29105"/>
    </cofactor>
    <text evidence="1">Binds 2 Zn(2+) ions per subunit.</text>
</comment>
<comment type="subunit">
    <text evidence="1">The RNAP catalytic core consists of 2 alpha, 1 beta, 1 beta' and 1 omega subunit. When a sigma factor is associated with the core the holoenzyme is formed, which can initiate transcription.</text>
</comment>
<comment type="similarity">
    <text evidence="1">Belongs to the RNA polymerase beta' chain family.</text>
</comment>
<keyword id="KW-0240">DNA-directed RNA polymerase</keyword>
<keyword id="KW-0460">Magnesium</keyword>
<keyword id="KW-0479">Metal-binding</keyword>
<keyword id="KW-0548">Nucleotidyltransferase</keyword>
<keyword id="KW-1185">Reference proteome</keyword>
<keyword id="KW-0804">Transcription</keyword>
<keyword id="KW-0808">Transferase</keyword>
<keyword id="KW-0862">Zinc</keyword>
<reference key="1">
    <citation type="submission" date="2008-04" db="EMBL/GenBank/DDBJ databases">
        <title>Complete sequence of chromosome of Natranaerobius thermophilus JW/NM-WN-LF.</title>
        <authorList>
            <consortium name="US DOE Joint Genome Institute"/>
            <person name="Copeland A."/>
            <person name="Lucas S."/>
            <person name="Lapidus A."/>
            <person name="Glavina del Rio T."/>
            <person name="Dalin E."/>
            <person name="Tice H."/>
            <person name="Bruce D."/>
            <person name="Goodwin L."/>
            <person name="Pitluck S."/>
            <person name="Chertkov O."/>
            <person name="Brettin T."/>
            <person name="Detter J.C."/>
            <person name="Han C."/>
            <person name="Kuske C.R."/>
            <person name="Schmutz J."/>
            <person name="Larimer F."/>
            <person name="Land M."/>
            <person name="Hauser L."/>
            <person name="Kyrpides N."/>
            <person name="Lykidis A."/>
            <person name="Mesbah N.M."/>
            <person name="Wiegel J."/>
        </authorList>
    </citation>
    <scope>NUCLEOTIDE SEQUENCE [LARGE SCALE GENOMIC DNA]</scope>
    <source>
        <strain>ATCC BAA-1301 / DSM 18059 / JW/NM-WN-LF</strain>
    </source>
</reference>
<proteinExistence type="inferred from homology"/>
<evidence type="ECO:0000255" key="1">
    <source>
        <dbReference type="HAMAP-Rule" id="MF_01322"/>
    </source>
</evidence>
<evidence type="ECO:0000256" key="2">
    <source>
        <dbReference type="SAM" id="MobiDB-lite"/>
    </source>
</evidence>
<dbReference type="EC" id="2.7.7.6" evidence="1"/>
<dbReference type="EMBL" id="CP001034">
    <property type="protein sequence ID" value="ACB83786.1"/>
    <property type="molecule type" value="Genomic_DNA"/>
</dbReference>
<dbReference type="RefSeq" id="WP_012446676.1">
    <property type="nucleotide sequence ID" value="NC_010718.1"/>
</dbReference>
<dbReference type="SMR" id="B2A4D2"/>
<dbReference type="FunCoup" id="B2A4D2">
    <property type="interactions" value="374"/>
</dbReference>
<dbReference type="STRING" id="457570.Nther_0187"/>
<dbReference type="KEGG" id="nth:Nther_0187"/>
<dbReference type="eggNOG" id="COG0086">
    <property type="taxonomic scope" value="Bacteria"/>
</dbReference>
<dbReference type="HOGENOM" id="CLU_000524_3_1_9"/>
<dbReference type="InParanoid" id="B2A4D2"/>
<dbReference type="OrthoDB" id="9815296at2"/>
<dbReference type="Proteomes" id="UP000001683">
    <property type="component" value="Chromosome"/>
</dbReference>
<dbReference type="GO" id="GO:0000428">
    <property type="term" value="C:DNA-directed RNA polymerase complex"/>
    <property type="evidence" value="ECO:0007669"/>
    <property type="project" value="UniProtKB-KW"/>
</dbReference>
<dbReference type="GO" id="GO:0003677">
    <property type="term" value="F:DNA binding"/>
    <property type="evidence" value="ECO:0007669"/>
    <property type="project" value="UniProtKB-UniRule"/>
</dbReference>
<dbReference type="GO" id="GO:0003899">
    <property type="term" value="F:DNA-directed RNA polymerase activity"/>
    <property type="evidence" value="ECO:0007669"/>
    <property type="project" value="UniProtKB-UniRule"/>
</dbReference>
<dbReference type="GO" id="GO:0000287">
    <property type="term" value="F:magnesium ion binding"/>
    <property type="evidence" value="ECO:0007669"/>
    <property type="project" value="UniProtKB-UniRule"/>
</dbReference>
<dbReference type="GO" id="GO:0008270">
    <property type="term" value="F:zinc ion binding"/>
    <property type="evidence" value="ECO:0007669"/>
    <property type="project" value="UniProtKB-UniRule"/>
</dbReference>
<dbReference type="GO" id="GO:0006351">
    <property type="term" value="P:DNA-templated transcription"/>
    <property type="evidence" value="ECO:0007669"/>
    <property type="project" value="UniProtKB-UniRule"/>
</dbReference>
<dbReference type="CDD" id="cd02655">
    <property type="entry name" value="RNAP_beta'_C"/>
    <property type="match status" value="1"/>
</dbReference>
<dbReference type="CDD" id="cd01609">
    <property type="entry name" value="RNAP_beta'_N"/>
    <property type="match status" value="1"/>
</dbReference>
<dbReference type="FunFam" id="1.10.132.30:FF:000003">
    <property type="entry name" value="DNA-directed RNA polymerase subunit beta"/>
    <property type="match status" value="1"/>
</dbReference>
<dbReference type="FunFam" id="1.10.150.390:FF:000002">
    <property type="entry name" value="DNA-directed RNA polymerase subunit beta"/>
    <property type="match status" value="1"/>
</dbReference>
<dbReference type="FunFam" id="4.10.860.120:FF:000001">
    <property type="entry name" value="DNA-directed RNA polymerase subunit beta"/>
    <property type="match status" value="1"/>
</dbReference>
<dbReference type="Gene3D" id="1.10.132.30">
    <property type="match status" value="1"/>
</dbReference>
<dbReference type="Gene3D" id="1.10.150.390">
    <property type="match status" value="1"/>
</dbReference>
<dbReference type="Gene3D" id="1.10.1790.20">
    <property type="match status" value="1"/>
</dbReference>
<dbReference type="Gene3D" id="1.10.40.90">
    <property type="match status" value="1"/>
</dbReference>
<dbReference type="Gene3D" id="2.40.40.20">
    <property type="match status" value="1"/>
</dbReference>
<dbReference type="Gene3D" id="2.40.50.100">
    <property type="match status" value="1"/>
</dbReference>
<dbReference type="Gene3D" id="4.10.860.120">
    <property type="entry name" value="RNA polymerase II, clamp domain"/>
    <property type="match status" value="1"/>
</dbReference>
<dbReference type="Gene3D" id="1.10.274.100">
    <property type="entry name" value="RNA polymerase Rpb1, domain 3"/>
    <property type="match status" value="1"/>
</dbReference>
<dbReference type="HAMAP" id="MF_01322">
    <property type="entry name" value="RNApol_bact_RpoC"/>
    <property type="match status" value="1"/>
</dbReference>
<dbReference type="InterPro" id="IPR045867">
    <property type="entry name" value="DNA-dir_RpoC_beta_prime"/>
</dbReference>
<dbReference type="InterPro" id="IPR012754">
    <property type="entry name" value="DNA-dir_RpoC_beta_prime_bact"/>
</dbReference>
<dbReference type="InterPro" id="IPR000722">
    <property type="entry name" value="RNA_pol_asu"/>
</dbReference>
<dbReference type="InterPro" id="IPR006592">
    <property type="entry name" value="RNA_pol_N"/>
</dbReference>
<dbReference type="InterPro" id="IPR007080">
    <property type="entry name" value="RNA_pol_Rpb1_1"/>
</dbReference>
<dbReference type="InterPro" id="IPR007066">
    <property type="entry name" value="RNA_pol_Rpb1_3"/>
</dbReference>
<dbReference type="InterPro" id="IPR042102">
    <property type="entry name" value="RNA_pol_Rpb1_3_sf"/>
</dbReference>
<dbReference type="InterPro" id="IPR007083">
    <property type="entry name" value="RNA_pol_Rpb1_4"/>
</dbReference>
<dbReference type="InterPro" id="IPR007081">
    <property type="entry name" value="RNA_pol_Rpb1_5"/>
</dbReference>
<dbReference type="InterPro" id="IPR044893">
    <property type="entry name" value="RNA_pol_Rpb1_clamp_domain"/>
</dbReference>
<dbReference type="InterPro" id="IPR038120">
    <property type="entry name" value="Rpb1_funnel_sf"/>
</dbReference>
<dbReference type="NCBIfam" id="TIGR02386">
    <property type="entry name" value="rpoC_TIGR"/>
    <property type="match status" value="1"/>
</dbReference>
<dbReference type="PANTHER" id="PTHR19376">
    <property type="entry name" value="DNA-DIRECTED RNA POLYMERASE"/>
    <property type="match status" value="1"/>
</dbReference>
<dbReference type="PANTHER" id="PTHR19376:SF54">
    <property type="entry name" value="DNA-DIRECTED RNA POLYMERASE SUBUNIT BETA"/>
    <property type="match status" value="1"/>
</dbReference>
<dbReference type="Pfam" id="PF04997">
    <property type="entry name" value="RNA_pol_Rpb1_1"/>
    <property type="match status" value="1"/>
</dbReference>
<dbReference type="Pfam" id="PF00623">
    <property type="entry name" value="RNA_pol_Rpb1_2"/>
    <property type="match status" value="1"/>
</dbReference>
<dbReference type="Pfam" id="PF04983">
    <property type="entry name" value="RNA_pol_Rpb1_3"/>
    <property type="match status" value="1"/>
</dbReference>
<dbReference type="Pfam" id="PF05000">
    <property type="entry name" value="RNA_pol_Rpb1_4"/>
    <property type="match status" value="1"/>
</dbReference>
<dbReference type="Pfam" id="PF04998">
    <property type="entry name" value="RNA_pol_Rpb1_5"/>
    <property type="match status" value="1"/>
</dbReference>
<dbReference type="SMART" id="SM00663">
    <property type="entry name" value="RPOLA_N"/>
    <property type="match status" value="1"/>
</dbReference>
<dbReference type="SUPFAM" id="SSF64484">
    <property type="entry name" value="beta and beta-prime subunits of DNA dependent RNA-polymerase"/>
    <property type="match status" value="1"/>
</dbReference>
<accession>B2A4D2</accession>
<protein>
    <recommendedName>
        <fullName evidence="1">DNA-directed RNA polymerase subunit beta'</fullName>
        <shortName evidence="1">RNAP subunit beta'</shortName>
        <ecNumber evidence="1">2.7.7.6</ecNumber>
    </recommendedName>
    <alternativeName>
        <fullName evidence="1">RNA polymerase subunit beta'</fullName>
    </alternativeName>
    <alternativeName>
        <fullName evidence="1">Transcriptase subunit beta'</fullName>
    </alternativeName>
</protein>
<name>RPOC_NATTJ</name>
<organism>
    <name type="scientific">Natranaerobius thermophilus (strain ATCC BAA-1301 / DSM 18059 / JW/NM-WN-LF)</name>
    <dbReference type="NCBI Taxonomy" id="457570"/>
    <lineage>
        <taxon>Bacteria</taxon>
        <taxon>Bacillati</taxon>
        <taxon>Bacillota</taxon>
        <taxon>Clostridia</taxon>
        <taxon>Natranaerobiales</taxon>
        <taxon>Natranaerobiaceae</taxon>
        <taxon>Natranaerobius</taxon>
    </lineage>
</organism>
<gene>
    <name evidence="1" type="primary">rpoC</name>
    <name type="ordered locus">Nther_0187</name>
</gene>
<sequence>MIDVNSFNALKIGLASPEQIRSWSKGEVKKPETINYRTLKPEKEGLFCEKIFGPQKDWECHCGKYKRVRYKGIVCDRCGVEVTQSKVRRERMGHIELAAPVSHIWYFKGIPSRLGLLLNMSPRALEKVLYFASYVVIDPGETSLAKKQLLTETEYREYYDKFESQFKKGKGFKAMMGAEAIKELLKELDLEALTKELRNDLKTAKGQKKVRTVRRLEVAESFRKSGNKPEWMILDVIPVIPPDLRPMVQLDGGRFATSDLNDLYRRVINRNNRLKRLLNLGAPDIIVRNEKRMLQEAVDALIDNGRRGRAVTGPGNRPLKSLSDMLKGKQGRFRQNLLGKRVDYSGRSVIVVGPELKIYQCGLPKEMALELFKPFVMKRLVEKELSHNIKSAKRMVEKVRPEVWDVLEEVIKEHPVLLNRAPTLHRLGIQAFEPVLIEGRAIQIHPLVCPAYNADFDGDQMAVHLPLSAEAQAEARILMLASQNILNPKDGSPVATPTQDMVLGSYYLTLENTSDFKNDAYFSSPAEAVMAFRQKDIDMQEPIAVDVRNYEKKDFSLPENNKPSDSNLLITTVGKIIFNEIFPEDFPYVNGEKPGLNEYDWLKSGERIEDKLKQREPREAIQKGSLGDLVGHCYRKYGSTKTASILDKMKEVGYSYATKAGVTIGITDVAVPEKKHEIISDAEGKVDEVEKQHHRGLITPQERYTRVIDIWNNAKDSVTGAVMDNLDIFNPIYMMATSGARGNISQITQLAGMRGLMADPTGRIIDLPIKTNFREGLTVLEYFNSTHGARKGLADTALKTADSGYLTRRLVDVSQDVIVREEDCGETDGVEVGAITNGNEIIEGIGDRVVGRFAAADIRDRQGNMIVNRNELITEDAAEQIQEAKLDQVPIRSVLTCKTKNGVCVKCYGRDLATGAVANVGEAVGIIAAQSIGEPGTQLTMRTFHTGGVAGDDITQGLPRIEELFEARKPKGLAVISEIDGRITVKTEHNKRKVIVTPEKGEQKSYNIPYGARLKVKDGDEINAGDEITEGSINPHDLLKIKGVRGVQLYILQEVQKVYRMQGVDISDKHIEIIIRQMLKKVRIEEAGDTELLPGSYVDFFDFEKVNERIKEEGGEPAKAKSLLLGITKASLATDSFLSAASFQETTRVLTEAAIKGKVDPLIGLKENVIIGKLVPAGTGMPHYRNIDLAYNDEENEAQSDKSQDEQEIGEITVDMGE</sequence>
<feature type="chain" id="PRO_0000353396" description="DNA-directed RNA polymerase subunit beta'">
    <location>
        <begin position="1"/>
        <end position="1218"/>
    </location>
</feature>
<feature type="region of interest" description="Disordered" evidence="2">
    <location>
        <begin position="1195"/>
        <end position="1218"/>
    </location>
</feature>
<feature type="binding site" evidence="1">
    <location>
        <position position="60"/>
    </location>
    <ligand>
        <name>Zn(2+)</name>
        <dbReference type="ChEBI" id="CHEBI:29105"/>
        <label>1</label>
    </ligand>
</feature>
<feature type="binding site" evidence="1">
    <location>
        <position position="62"/>
    </location>
    <ligand>
        <name>Zn(2+)</name>
        <dbReference type="ChEBI" id="CHEBI:29105"/>
        <label>1</label>
    </ligand>
</feature>
<feature type="binding site" evidence="1">
    <location>
        <position position="75"/>
    </location>
    <ligand>
        <name>Zn(2+)</name>
        <dbReference type="ChEBI" id="CHEBI:29105"/>
        <label>1</label>
    </ligand>
</feature>
<feature type="binding site" evidence="1">
    <location>
        <position position="78"/>
    </location>
    <ligand>
        <name>Zn(2+)</name>
        <dbReference type="ChEBI" id="CHEBI:29105"/>
        <label>1</label>
    </ligand>
</feature>
<feature type="binding site" evidence="1">
    <location>
        <position position="455"/>
    </location>
    <ligand>
        <name>Mg(2+)</name>
        <dbReference type="ChEBI" id="CHEBI:18420"/>
    </ligand>
</feature>
<feature type="binding site" evidence="1">
    <location>
        <position position="457"/>
    </location>
    <ligand>
        <name>Mg(2+)</name>
        <dbReference type="ChEBI" id="CHEBI:18420"/>
    </ligand>
</feature>
<feature type="binding site" evidence="1">
    <location>
        <position position="459"/>
    </location>
    <ligand>
        <name>Mg(2+)</name>
        <dbReference type="ChEBI" id="CHEBI:18420"/>
    </ligand>
</feature>
<feature type="binding site" evidence="1">
    <location>
        <position position="824"/>
    </location>
    <ligand>
        <name>Zn(2+)</name>
        <dbReference type="ChEBI" id="CHEBI:29105"/>
        <label>2</label>
    </ligand>
</feature>
<feature type="binding site" evidence="1">
    <location>
        <position position="897"/>
    </location>
    <ligand>
        <name>Zn(2+)</name>
        <dbReference type="ChEBI" id="CHEBI:29105"/>
        <label>2</label>
    </ligand>
</feature>
<feature type="binding site" evidence="1">
    <location>
        <position position="904"/>
    </location>
    <ligand>
        <name>Zn(2+)</name>
        <dbReference type="ChEBI" id="CHEBI:29105"/>
        <label>2</label>
    </ligand>
</feature>
<feature type="binding site" evidence="1">
    <location>
        <position position="907"/>
    </location>
    <ligand>
        <name>Zn(2+)</name>
        <dbReference type="ChEBI" id="CHEBI:29105"/>
        <label>2</label>
    </ligand>
</feature>